<gene>
    <name evidence="1" type="primary">ruvA</name>
    <name type="ordered locus">E2348C_1986</name>
</gene>
<reference key="1">
    <citation type="journal article" date="2009" name="J. Bacteriol.">
        <title>Complete genome sequence and comparative genome analysis of enteropathogenic Escherichia coli O127:H6 strain E2348/69.</title>
        <authorList>
            <person name="Iguchi A."/>
            <person name="Thomson N.R."/>
            <person name="Ogura Y."/>
            <person name="Saunders D."/>
            <person name="Ooka T."/>
            <person name="Henderson I.R."/>
            <person name="Harris D."/>
            <person name="Asadulghani M."/>
            <person name="Kurokawa K."/>
            <person name="Dean P."/>
            <person name="Kenny B."/>
            <person name="Quail M.A."/>
            <person name="Thurston S."/>
            <person name="Dougan G."/>
            <person name="Hayashi T."/>
            <person name="Parkhill J."/>
            <person name="Frankel G."/>
        </authorList>
    </citation>
    <scope>NUCLEOTIDE SEQUENCE [LARGE SCALE GENOMIC DNA]</scope>
    <source>
        <strain>E2348/69 / EPEC</strain>
    </source>
</reference>
<reference key="2">
    <citation type="journal article" date="2020" name="Cell Rep.">
        <title>DNA ADP-Ribosylation Stalls Replication and Is Reversed by RecF-Mediated Homologous Recombination and Nucleotide Excision Repair.</title>
        <authorList>
            <person name="Lawaree E."/>
            <person name="Jankevicius G."/>
            <person name="Cooper C."/>
            <person name="Ahel I."/>
            <person name="Uphoff S."/>
            <person name="Tang C.M."/>
        </authorList>
    </citation>
    <scope>FUNCTION</scope>
    <scope>DISRUPTION PHENOTYPE</scope>
    <source>
        <strain>E2348/69 / EPEC</strain>
    </source>
</reference>
<comment type="function">
    <text evidence="1">The RuvA-RuvB-RuvC complex processes Holliday junction (HJ) DNA during genetic recombination and DNA repair, while the RuvA-RuvB complex plays an important role in the rescue of blocked DNA replication forks via replication fork reversal (RFR). RuvA specifically binds to HJ cruciform DNA, conferring on it an open structure. The RuvB hexamer acts as an ATP-dependent pump, pulling dsDNA into and through the RuvAB complex. HJ branch migration allows RuvC to scan DNA until it finds its consensus sequence, where it cleaves and resolves the cruciform DNA.</text>
</comment>
<comment type="function">
    <text evidence="2">Plays a role in recovery after DNA ADP-ribosylation, probably via replication fork reversal.</text>
</comment>
<comment type="subunit">
    <text evidence="1">Homotetramer. Forms an RuvA(8)-RuvB(12)-Holliday junction (HJ) complex. HJ DNA is sandwiched between 2 RuvA tetramers; dsDNA enters through RuvA and exits via RuvB. An RuvB hexamer assembles on each DNA strand where it exits the tetramer. Each RuvB hexamer is contacted by two RuvA subunits (via domain III) on 2 adjacent RuvB subunits; this complex drives branch migration. In the full resolvosome a probable DNA-RuvA(4)-RuvB(12)-RuvC(2) complex forms which resolves the HJ.</text>
</comment>
<comment type="subcellular location">
    <subcellularLocation>
        <location evidence="1">Cytoplasm</location>
    </subcellularLocation>
</comment>
<comment type="domain">
    <text evidence="1">Has three domains with a flexible linker between the domains II and III and assumes an 'L' shape. Domain III is highly mobile and contacts RuvB.</text>
</comment>
<comment type="disruption phenotype">
    <text evidence="2">Significantly reduced survival of cells expressing DNA ADP-ribosyl transferase (darT) mutant G49D.</text>
</comment>
<comment type="similarity">
    <text evidence="1">Belongs to the RuvA family.</text>
</comment>
<protein>
    <recommendedName>
        <fullName evidence="1">Holliday junction branch migration complex subunit RuvA</fullName>
    </recommendedName>
</protein>
<name>RUVA_ECO27</name>
<evidence type="ECO:0000255" key="1">
    <source>
        <dbReference type="HAMAP-Rule" id="MF_00031"/>
    </source>
</evidence>
<evidence type="ECO:0000269" key="2">
    <source>
    </source>
</evidence>
<organism>
    <name type="scientific">Escherichia coli O127:H6 (strain E2348/69 / EPEC)</name>
    <dbReference type="NCBI Taxonomy" id="574521"/>
    <lineage>
        <taxon>Bacteria</taxon>
        <taxon>Pseudomonadati</taxon>
        <taxon>Pseudomonadota</taxon>
        <taxon>Gammaproteobacteria</taxon>
        <taxon>Enterobacterales</taxon>
        <taxon>Enterobacteriaceae</taxon>
        <taxon>Escherichia</taxon>
    </lineage>
</organism>
<sequence length="203" mass="22086">MIGRLRGIIIEKQPPLVLIEVGGVGYEVHMPMTCFYELPEAGQEAIVFTHFVVREDAQLLYGFNNKQERTLFKELIKTNGVGPKLALAILSGMSAQQFVNAVEREEVGALVKLPGIGKKTAERLIVEMKDRFKGLHGDLFTPAADLVLTSPASPATDDAEQEAVAALVALGYKPQEASRMVSKIARPDASSETLIREALRAAL</sequence>
<accession>B7USN8</accession>
<keyword id="KW-0963">Cytoplasm</keyword>
<keyword id="KW-0227">DNA damage</keyword>
<keyword id="KW-0233">DNA recombination</keyword>
<keyword id="KW-0234">DNA repair</keyword>
<keyword id="KW-0238">DNA-binding</keyword>
<keyword id="KW-1185">Reference proteome</keyword>
<keyword id="KW-0742">SOS response</keyword>
<feature type="chain" id="PRO_1000195141" description="Holliday junction branch migration complex subunit RuvA">
    <location>
        <begin position="1"/>
        <end position="203"/>
    </location>
</feature>
<feature type="region of interest" description="Domain I" evidence="1">
    <location>
        <begin position="1"/>
        <end position="64"/>
    </location>
</feature>
<feature type="region of interest" description="Domain II" evidence="1">
    <location>
        <begin position="65"/>
        <end position="142"/>
    </location>
</feature>
<feature type="region of interest" description="Flexible linker" evidence="1">
    <location>
        <begin position="143"/>
        <end position="154"/>
    </location>
</feature>
<feature type="region of interest" description="Domain III" evidence="1">
    <location>
        <begin position="155"/>
        <end position="203"/>
    </location>
</feature>
<proteinExistence type="inferred from homology"/>
<dbReference type="EMBL" id="FM180568">
    <property type="protein sequence ID" value="CAS09534.1"/>
    <property type="molecule type" value="Genomic_DNA"/>
</dbReference>
<dbReference type="RefSeq" id="WP_000580323.1">
    <property type="nucleotide sequence ID" value="NC_011601.1"/>
</dbReference>
<dbReference type="SMR" id="B7USN8"/>
<dbReference type="GeneID" id="75057740"/>
<dbReference type="KEGG" id="ecg:E2348C_1986"/>
<dbReference type="HOGENOM" id="CLU_087936_0_0_6"/>
<dbReference type="Proteomes" id="UP000008205">
    <property type="component" value="Chromosome"/>
</dbReference>
<dbReference type="GO" id="GO:0005737">
    <property type="term" value="C:cytoplasm"/>
    <property type="evidence" value="ECO:0007669"/>
    <property type="project" value="UniProtKB-SubCell"/>
</dbReference>
<dbReference type="GO" id="GO:0009379">
    <property type="term" value="C:Holliday junction helicase complex"/>
    <property type="evidence" value="ECO:0007669"/>
    <property type="project" value="InterPro"/>
</dbReference>
<dbReference type="GO" id="GO:0048476">
    <property type="term" value="C:Holliday junction resolvase complex"/>
    <property type="evidence" value="ECO:0007669"/>
    <property type="project" value="UniProtKB-UniRule"/>
</dbReference>
<dbReference type="GO" id="GO:0005524">
    <property type="term" value="F:ATP binding"/>
    <property type="evidence" value="ECO:0007669"/>
    <property type="project" value="InterPro"/>
</dbReference>
<dbReference type="GO" id="GO:0000400">
    <property type="term" value="F:four-way junction DNA binding"/>
    <property type="evidence" value="ECO:0007669"/>
    <property type="project" value="UniProtKB-UniRule"/>
</dbReference>
<dbReference type="GO" id="GO:0009378">
    <property type="term" value="F:four-way junction helicase activity"/>
    <property type="evidence" value="ECO:0007669"/>
    <property type="project" value="InterPro"/>
</dbReference>
<dbReference type="GO" id="GO:0006310">
    <property type="term" value="P:DNA recombination"/>
    <property type="evidence" value="ECO:0007669"/>
    <property type="project" value="UniProtKB-UniRule"/>
</dbReference>
<dbReference type="GO" id="GO:0006281">
    <property type="term" value="P:DNA repair"/>
    <property type="evidence" value="ECO:0007669"/>
    <property type="project" value="UniProtKB-UniRule"/>
</dbReference>
<dbReference type="GO" id="GO:0009432">
    <property type="term" value="P:SOS response"/>
    <property type="evidence" value="ECO:0007669"/>
    <property type="project" value="UniProtKB-UniRule"/>
</dbReference>
<dbReference type="CDD" id="cd14332">
    <property type="entry name" value="UBA_RuvA_C"/>
    <property type="match status" value="1"/>
</dbReference>
<dbReference type="FunFam" id="1.10.150.20:FF:000012">
    <property type="entry name" value="Holliday junction ATP-dependent DNA helicase RuvA"/>
    <property type="match status" value="1"/>
</dbReference>
<dbReference type="FunFam" id="1.10.8.10:FF:000008">
    <property type="entry name" value="Holliday junction ATP-dependent DNA helicase RuvA"/>
    <property type="match status" value="1"/>
</dbReference>
<dbReference type="FunFam" id="2.40.50.140:FF:000083">
    <property type="entry name" value="Holliday junction ATP-dependent DNA helicase RuvA"/>
    <property type="match status" value="1"/>
</dbReference>
<dbReference type="Gene3D" id="1.10.150.20">
    <property type="entry name" value="5' to 3' exonuclease, C-terminal subdomain"/>
    <property type="match status" value="1"/>
</dbReference>
<dbReference type="Gene3D" id="1.10.8.10">
    <property type="entry name" value="DNA helicase RuvA subunit, C-terminal domain"/>
    <property type="match status" value="1"/>
</dbReference>
<dbReference type="Gene3D" id="2.40.50.140">
    <property type="entry name" value="Nucleic acid-binding proteins"/>
    <property type="match status" value="1"/>
</dbReference>
<dbReference type="HAMAP" id="MF_00031">
    <property type="entry name" value="DNA_HJ_migration_RuvA"/>
    <property type="match status" value="1"/>
</dbReference>
<dbReference type="InterPro" id="IPR013849">
    <property type="entry name" value="DNA_helicase_Holl-junc_RuvA_I"/>
</dbReference>
<dbReference type="InterPro" id="IPR003583">
    <property type="entry name" value="Hlx-hairpin-Hlx_DNA-bd_motif"/>
</dbReference>
<dbReference type="InterPro" id="IPR012340">
    <property type="entry name" value="NA-bd_OB-fold"/>
</dbReference>
<dbReference type="InterPro" id="IPR000085">
    <property type="entry name" value="RuvA"/>
</dbReference>
<dbReference type="InterPro" id="IPR010994">
    <property type="entry name" value="RuvA_2-like"/>
</dbReference>
<dbReference type="InterPro" id="IPR011114">
    <property type="entry name" value="RuvA_C"/>
</dbReference>
<dbReference type="InterPro" id="IPR036267">
    <property type="entry name" value="RuvA_C_sf"/>
</dbReference>
<dbReference type="NCBIfam" id="TIGR00084">
    <property type="entry name" value="ruvA"/>
    <property type="match status" value="1"/>
</dbReference>
<dbReference type="Pfam" id="PF14520">
    <property type="entry name" value="HHH_5"/>
    <property type="match status" value="1"/>
</dbReference>
<dbReference type="Pfam" id="PF07499">
    <property type="entry name" value="RuvA_C"/>
    <property type="match status" value="1"/>
</dbReference>
<dbReference type="Pfam" id="PF01330">
    <property type="entry name" value="RuvA_N"/>
    <property type="match status" value="1"/>
</dbReference>
<dbReference type="SMART" id="SM00278">
    <property type="entry name" value="HhH1"/>
    <property type="match status" value="2"/>
</dbReference>
<dbReference type="SUPFAM" id="SSF46929">
    <property type="entry name" value="DNA helicase RuvA subunit, C-terminal domain"/>
    <property type="match status" value="1"/>
</dbReference>
<dbReference type="SUPFAM" id="SSF50249">
    <property type="entry name" value="Nucleic acid-binding proteins"/>
    <property type="match status" value="1"/>
</dbReference>
<dbReference type="SUPFAM" id="SSF47781">
    <property type="entry name" value="RuvA domain 2-like"/>
    <property type="match status" value="1"/>
</dbReference>